<comment type="function">
    <text evidence="1">Key component of the proton channel; it plays a direct role in the translocation of protons across the membrane.</text>
</comment>
<comment type="subunit">
    <text evidence="1">F-type ATPases have 2 components, CF(1) - the catalytic core - and CF(0) - the membrane proton channel. CF(1) has five subunits: alpha(3), beta(3), gamma(1), delta(1), epsilon(1). CF(0) has three main subunits: a(1), b(2) and c(9-12). The alpha and beta chains form an alternating ring which encloses part of the gamma chain. CF(1) is attached to CF(0) by a central stalk formed by the gamma and epsilon chains, while a peripheral stalk is formed by the delta and b chains.</text>
</comment>
<comment type="subcellular location">
    <subcellularLocation>
        <location evidence="1">Cell inner membrane</location>
        <topology evidence="1">Multi-pass membrane protein</topology>
    </subcellularLocation>
</comment>
<comment type="similarity">
    <text evidence="1">Belongs to the ATPase A chain family.</text>
</comment>
<organism>
    <name type="scientific">Acinetobacter baumannii (strain AYE)</name>
    <dbReference type="NCBI Taxonomy" id="509173"/>
    <lineage>
        <taxon>Bacteria</taxon>
        <taxon>Pseudomonadati</taxon>
        <taxon>Pseudomonadota</taxon>
        <taxon>Gammaproteobacteria</taxon>
        <taxon>Moraxellales</taxon>
        <taxon>Moraxellaceae</taxon>
        <taxon>Acinetobacter</taxon>
        <taxon>Acinetobacter calcoaceticus/baumannii complex</taxon>
    </lineage>
</organism>
<feature type="chain" id="PRO_0000362220" description="ATP synthase subunit a">
    <location>
        <begin position="1"/>
        <end position="291"/>
    </location>
</feature>
<feature type="transmembrane region" description="Helical" evidence="1">
    <location>
        <begin position="50"/>
        <end position="70"/>
    </location>
</feature>
<feature type="transmembrane region" description="Helical" evidence="1">
    <location>
        <begin position="108"/>
        <end position="128"/>
    </location>
</feature>
<feature type="transmembrane region" description="Helical" evidence="1">
    <location>
        <begin position="129"/>
        <end position="149"/>
    </location>
</feature>
<feature type="transmembrane region" description="Helical" evidence="1">
    <location>
        <begin position="161"/>
        <end position="181"/>
    </location>
</feature>
<feature type="transmembrane region" description="Helical" evidence="1">
    <location>
        <begin position="203"/>
        <end position="223"/>
    </location>
</feature>
<feature type="transmembrane region" description="Helical" evidence="1">
    <location>
        <begin position="241"/>
        <end position="261"/>
    </location>
</feature>
<feature type="transmembrane region" description="Helical" evidence="1">
    <location>
        <begin position="262"/>
        <end position="282"/>
    </location>
</feature>
<name>ATP6_ACIBY</name>
<gene>
    <name evidence="1" type="primary">atpB</name>
    <name type="ordered locus">ABAYE3723</name>
</gene>
<protein>
    <recommendedName>
        <fullName evidence="1">ATP synthase subunit a</fullName>
    </recommendedName>
    <alternativeName>
        <fullName evidence="1">ATP synthase F0 sector subunit a</fullName>
    </alternativeName>
    <alternativeName>
        <fullName evidence="1">F-ATPase subunit 6</fullName>
    </alternativeName>
</protein>
<reference key="1">
    <citation type="journal article" date="2008" name="PLoS ONE">
        <title>Comparative analysis of Acinetobacters: three genomes for three lifestyles.</title>
        <authorList>
            <person name="Vallenet D."/>
            <person name="Nordmann P."/>
            <person name="Barbe V."/>
            <person name="Poirel L."/>
            <person name="Mangenot S."/>
            <person name="Bataille E."/>
            <person name="Dossat C."/>
            <person name="Gas S."/>
            <person name="Kreimeyer A."/>
            <person name="Lenoble P."/>
            <person name="Oztas S."/>
            <person name="Poulain J."/>
            <person name="Segurens B."/>
            <person name="Robert C."/>
            <person name="Abergel C."/>
            <person name="Claverie J.-M."/>
            <person name="Raoult D."/>
            <person name="Medigue C."/>
            <person name="Weissenbach J."/>
            <person name="Cruveiller S."/>
        </authorList>
    </citation>
    <scope>NUCLEOTIDE SEQUENCE [LARGE SCALE GENOMIC DNA]</scope>
    <source>
        <strain>AYE</strain>
    </source>
</reference>
<dbReference type="EMBL" id="CU459141">
    <property type="protein sequence ID" value="CAM88486.1"/>
    <property type="molecule type" value="Genomic_DNA"/>
</dbReference>
<dbReference type="RefSeq" id="WP_000718586.1">
    <property type="nucleotide sequence ID" value="NZ_JBDGFB010000006.1"/>
</dbReference>
<dbReference type="SMR" id="B0VBM6"/>
<dbReference type="EnsemblBacteria" id="CAM88486">
    <property type="protein sequence ID" value="CAM88486"/>
    <property type="gene ID" value="ABAYE3723"/>
</dbReference>
<dbReference type="GeneID" id="92892161"/>
<dbReference type="KEGG" id="aby:ABAYE3723"/>
<dbReference type="HOGENOM" id="CLU_041018_1_0_6"/>
<dbReference type="GO" id="GO:0005886">
    <property type="term" value="C:plasma membrane"/>
    <property type="evidence" value="ECO:0007669"/>
    <property type="project" value="UniProtKB-SubCell"/>
</dbReference>
<dbReference type="GO" id="GO:0045259">
    <property type="term" value="C:proton-transporting ATP synthase complex"/>
    <property type="evidence" value="ECO:0007669"/>
    <property type="project" value="UniProtKB-KW"/>
</dbReference>
<dbReference type="GO" id="GO:0046933">
    <property type="term" value="F:proton-transporting ATP synthase activity, rotational mechanism"/>
    <property type="evidence" value="ECO:0007669"/>
    <property type="project" value="UniProtKB-UniRule"/>
</dbReference>
<dbReference type="GO" id="GO:0042777">
    <property type="term" value="P:proton motive force-driven plasma membrane ATP synthesis"/>
    <property type="evidence" value="ECO:0007669"/>
    <property type="project" value="TreeGrafter"/>
</dbReference>
<dbReference type="CDD" id="cd00310">
    <property type="entry name" value="ATP-synt_Fo_a_6"/>
    <property type="match status" value="1"/>
</dbReference>
<dbReference type="FunFam" id="1.20.120.220:FF:000002">
    <property type="entry name" value="ATP synthase subunit a"/>
    <property type="match status" value="1"/>
</dbReference>
<dbReference type="Gene3D" id="1.20.120.220">
    <property type="entry name" value="ATP synthase, F0 complex, subunit A"/>
    <property type="match status" value="1"/>
</dbReference>
<dbReference type="HAMAP" id="MF_01393">
    <property type="entry name" value="ATP_synth_a_bact"/>
    <property type="match status" value="1"/>
</dbReference>
<dbReference type="InterPro" id="IPR045082">
    <property type="entry name" value="ATP_syn_F0_a_bact/chloroplast"/>
</dbReference>
<dbReference type="InterPro" id="IPR000568">
    <property type="entry name" value="ATP_synth_F0_asu"/>
</dbReference>
<dbReference type="InterPro" id="IPR023011">
    <property type="entry name" value="ATP_synth_F0_asu_AS"/>
</dbReference>
<dbReference type="InterPro" id="IPR035908">
    <property type="entry name" value="F0_ATP_A_sf"/>
</dbReference>
<dbReference type="NCBIfam" id="TIGR01131">
    <property type="entry name" value="ATP_synt_6_or_A"/>
    <property type="match status" value="1"/>
</dbReference>
<dbReference type="NCBIfam" id="NF004477">
    <property type="entry name" value="PRK05815.1-1"/>
    <property type="match status" value="1"/>
</dbReference>
<dbReference type="PANTHER" id="PTHR42823">
    <property type="entry name" value="ATP SYNTHASE SUBUNIT A, CHLOROPLASTIC"/>
    <property type="match status" value="1"/>
</dbReference>
<dbReference type="PANTHER" id="PTHR42823:SF3">
    <property type="entry name" value="ATP SYNTHASE SUBUNIT A, CHLOROPLASTIC"/>
    <property type="match status" value="1"/>
</dbReference>
<dbReference type="Pfam" id="PF00119">
    <property type="entry name" value="ATP-synt_A"/>
    <property type="match status" value="1"/>
</dbReference>
<dbReference type="SUPFAM" id="SSF81336">
    <property type="entry name" value="F1F0 ATP synthase subunit A"/>
    <property type="match status" value="1"/>
</dbReference>
<dbReference type="PROSITE" id="PS00449">
    <property type="entry name" value="ATPASE_A"/>
    <property type="match status" value="1"/>
</dbReference>
<sequence>MAAEEHALTSTEYIKHHLTNMTYGKMPDGTWKLAETAEEAHSMGFTAIHLDSMGWSIGLGVIFCLLFWIVARAANAGVPTKFQSAIEMIIEFVDSSVRDTFHGKSRLIAPLALTIFVWIFLMNLMDLIPVDWIPQVAAFVGANVFGMDPHHVYFKIVPSTDPNITLGMSLSVFVLILFYSIREKGVGGFVGELALNPFNPSNPVAKALLIPVNLILELVTFLARPISLALRLFGNMYAGELIFILIALLPFWIQWALSVPWAIFHILVITLQAFIFMMLTIVYLSMASEKH</sequence>
<accession>B0VBM6</accession>
<keyword id="KW-0066">ATP synthesis</keyword>
<keyword id="KW-0997">Cell inner membrane</keyword>
<keyword id="KW-1003">Cell membrane</keyword>
<keyword id="KW-0138">CF(0)</keyword>
<keyword id="KW-0375">Hydrogen ion transport</keyword>
<keyword id="KW-0406">Ion transport</keyword>
<keyword id="KW-0472">Membrane</keyword>
<keyword id="KW-0812">Transmembrane</keyword>
<keyword id="KW-1133">Transmembrane helix</keyword>
<keyword id="KW-0813">Transport</keyword>
<proteinExistence type="inferred from homology"/>
<evidence type="ECO:0000255" key="1">
    <source>
        <dbReference type="HAMAP-Rule" id="MF_01393"/>
    </source>
</evidence>